<reference evidence="4" key="1">
    <citation type="journal article" date="2009" name="BMC Evol. Biol.">
        <title>A proteomic approach for studying insect phylogeny: CAPA peptides of ancient insect taxa (Dictyoptera, Blattoptera) as a test case.</title>
        <authorList>
            <person name="Roth S."/>
            <person name="Fromm B."/>
            <person name="Gaede G."/>
            <person name="Predel R."/>
        </authorList>
    </citation>
    <scope>PROTEIN SEQUENCE</scope>
    <scope>AMIDATION AT VAL-11</scope>
    <source>
        <tissue evidence="2">Abdominal perisympathetic organs</tissue>
    </source>
</reference>
<protein>
    <recommendedName>
        <fullName evidence="3">Periviscerokinin-2</fullName>
        <shortName evidence="3">LucVe-PVK-2</shortName>
    </recommendedName>
</protein>
<dbReference type="GO" id="GO:0005576">
    <property type="term" value="C:extracellular region"/>
    <property type="evidence" value="ECO:0007669"/>
    <property type="project" value="UniProtKB-SubCell"/>
</dbReference>
<dbReference type="GO" id="GO:0007218">
    <property type="term" value="P:neuropeptide signaling pathway"/>
    <property type="evidence" value="ECO:0007669"/>
    <property type="project" value="UniProtKB-KW"/>
</dbReference>
<dbReference type="InterPro" id="IPR013231">
    <property type="entry name" value="Periviscerokinin"/>
</dbReference>
<dbReference type="Pfam" id="PF08259">
    <property type="entry name" value="Periviscerokin"/>
    <property type="match status" value="1"/>
</dbReference>
<accession>P85673</accession>
<feature type="peptide" id="PRO_0000378798" description="Periviscerokinin-2" evidence="2">
    <location>
        <begin position="1"/>
        <end position="11"/>
    </location>
</feature>
<feature type="modified residue" description="Valine amide" evidence="2">
    <location>
        <position position="11"/>
    </location>
</feature>
<organism>
    <name type="scientific">Lucihormetica verrucosa</name>
    <name type="common">Cockroach</name>
    <dbReference type="NCBI Taxonomy" id="521514"/>
    <lineage>
        <taxon>Eukaryota</taxon>
        <taxon>Metazoa</taxon>
        <taxon>Ecdysozoa</taxon>
        <taxon>Arthropoda</taxon>
        <taxon>Hexapoda</taxon>
        <taxon>Insecta</taxon>
        <taxon>Pterygota</taxon>
        <taxon>Neoptera</taxon>
        <taxon>Polyneoptera</taxon>
        <taxon>Dictyoptera</taxon>
        <taxon>Blattodea</taxon>
        <taxon>Blaberoidea</taxon>
        <taxon>Blaberidae</taxon>
        <taxon>Blaberinae</taxon>
        <taxon>Lucihormetica</taxon>
    </lineage>
</organism>
<name>PVK2_LUCVE</name>
<proteinExistence type="evidence at protein level"/>
<comment type="function">
    <text evidence="4">Mediates visceral muscle contractile activity (myotropic activity).</text>
</comment>
<comment type="subcellular location">
    <subcellularLocation>
        <location evidence="4">Secreted</location>
    </subcellularLocation>
</comment>
<comment type="similarity">
    <text evidence="1">Belongs to the periviscerokinin family.</text>
</comment>
<keyword id="KW-0027">Amidation</keyword>
<keyword id="KW-0903">Direct protein sequencing</keyword>
<keyword id="KW-0527">Neuropeptide</keyword>
<keyword id="KW-0964">Secreted</keyword>
<sequence length="11" mass="1103">GSSGLISMPRV</sequence>
<evidence type="ECO:0000255" key="1"/>
<evidence type="ECO:0000269" key="2">
    <source>
    </source>
</evidence>
<evidence type="ECO:0000303" key="3">
    <source>
    </source>
</evidence>
<evidence type="ECO:0000305" key="4"/>